<proteinExistence type="inferred from homology"/>
<keyword id="KW-0119">Carbohydrate metabolism</keyword>
<keyword id="KW-0325">Glycoprotein</keyword>
<keyword id="KW-0326">Glycosidase</keyword>
<keyword id="KW-0378">Hydrolase</keyword>
<keyword id="KW-0624">Polysaccharide degradation</keyword>
<keyword id="KW-1185">Reference proteome</keyword>
<reference key="1">
    <citation type="journal article" date="2007" name="Nat. Biotechnol.">
        <title>Genome sequencing and analysis of the versatile cell factory Aspergillus niger CBS 513.88.</title>
        <authorList>
            <person name="Pel H.J."/>
            <person name="de Winde J.H."/>
            <person name="Archer D.B."/>
            <person name="Dyer P.S."/>
            <person name="Hofmann G."/>
            <person name="Schaap P.J."/>
            <person name="Turner G."/>
            <person name="de Vries R.P."/>
            <person name="Albang R."/>
            <person name="Albermann K."/>
            <person name="Andersen M.R."/>
            <person name="Bendtsen J.D."/>
            <person name="Benen J.A.E."/>
            <person name="van den Berg M."/>
            <person name="Breestraat S."/>
            <person name="Caddick M.X."/>
            <person name="Contreras R."/>
            <person name="Cornell M."/>
            <person name="Coutinho P.M."/>
            <person name="Danchin E.G.J."/>
            <person name="Debets A.J.M."/>
            <person name="Dekker P."/>
            <person name="van Dijck P.W.M."/>
            <person name="van Dijk A."/>
            <person name="Dijkhuizen L."/>
            <person name="Driessen A.J.M."/>
            <person name="d'Enfert C."/>
            <person name="Geysens S."/>
            <person name="Goosen C."/>
            <person name="Groot G.S.P."/>
            <person name="de Groot P.W.J."/>
            <person name="Guillemette T."/>
            <person name="Henrissat B."/>
            <person name="Herweijer M."/>
            <person name="van den Hombergh J.P.T.W."/>
            <person name="van den Hondel C.A.M.J.J."/>
            <person name="van der Heijden R.T.J.M."/>
            <person name="van der Kaaij R.M."/>
            <person name="Klis F.M."/>
            <person name="Kools H.J."/>
            <person name="Kubicek C.P."/>
            <person name="van Kuyk P.A."/>
            <person name="Lauber J."/>
            <person name="Lu X."/>
            <person name="van der Maarel M.J.E.C."/>
            <person name="Meulenberg R."/>
            <person name="Menke H."/>
            <person name="Mortimer M.A."/>
            <person name="Nielsen J."/>
            <person name="Oliver S.G."/>
            <person name="Olsthoorn M."/>
            <person name="Pal K."/>
            <person name="van Peij N.N.M.E."/>
            <person name="Ram A.F.J."/>
            <person name="Rinas U."/>
            <person name="Roubos J.A."/>
            <person name="Sagt C.M.J."/>
            <person name="Schmoll M."/>
            <person name="Sun J."/>
            <person name="Ussery D."/>
            <person name="Varga J."/>
            <person name="Vervecken W."/>
            <person name="van de Vondervoort P.J.J."/>
            <person name="Wedler H."/>
            <person name="Woesten H.A.B."/>
            <person name="Zeng A.-P."/>
            <person name="van Ooyen A.J.J."/>
            <person name="Visser J."/>
            <person name="Stam H."/>
        </authorList>
    </citation>
    <scope>NUCLEOTIDE SEQUENCE [LARGE SCALE GENOMIC DNA]</scope>
    <source>
        <strain>ATCC MYA-4892 / CBS 513.88 / FGSC A1513</strain>
    </source>
</reference>
<protein>
    <recommendedName>
        <fullName>Beta-mannosidase B</fullName>
        <ecNumber>3.2.1.25</ecNumber>
    </recommendedName>
    <alternativeName>
        <fullName>Mannanase B</fullName>
        <shortName>Mannase B</shortName>
    </alternativeName>
</protein>
<evidence type="ECO:0000250" key="1"/>
<evidence type="ECO:0000255" key="2"/>
<evidence type="ECO:0000305" key="3"/>
<comment type="function">
    <text evidence="1">Exoglycosidase that cleaves the single beta-linked mannose residue from the non-reducing end of beta-mannosidic oligosaccharides of various complexity and length. Prefers mannobiose over mannotriose and has no activity against polymeric mannan. Is also severely restricted by galactosyl substitutions at the +1 subsite (By similarity).</text>
</comment>
<comment type="catalytic activity">
    <reaction>
        <text>Hydrolysis of terminal, non-reducing beta-D-mannose residues in beta-D-mannosides.</text>
        <dbReference type="EC" id="3.2.1.25"/>
    </reaction>
</comment>
<comment type="pathway">
    <text>Glycan metabolism; N-glycan degradation.</text>
</comment>
<comment type="miscellaneous">
    <text evidence="1">In contrast to clade A beta-mannosidases, which are likely secreted, clade B proteins appear to be intracellular.</text>
</comment>
<comment type="similarity">
    <text evidence="3">Belongs to the glycosyl hydrolase 2 family. Beta-mannosidase B subfamily.</text>
</comment>
<organism>
    <name type="scientific">Aspergillus niger (strain ATCC MYA-4892 / CBS 513.88 / FGSC A1513)</name>
    <dbReference type="NCBI Taxonomy" id="425011"/>
    <lineage>
        <taxon>Eukaryota</taxon>
        <taxon>Fungi</taxon>
        <taxon>Dikarya</taxon>
        <taxon>Ascomycota</taxon>
        <taxon>Pezizomycotina</taxon>
        <taxon>Eurotiomycetes</taxon>
        <taxon>Eurotiomycetidae</taxon>
        <taxon>Eurotiales</taxon>
        <taxon>Aspergillaceae</taxon>
        <taxon>Aspergillus</taxon>
        <taxon>Aspergillus subgen. Circumdati</taxon>
    </lineage>
</organism>
<dbReference type="EC" id="3.2.1.25"/>
<dbReference type="EMBL" id="AM270263">
    <property type="protein sequence ID" value="CAK48467.1"/>
    <property type="molecule type" value="Genomic_DNA"/>
</dbReference>
<dbReference type="RefSeq" id="XP_001395271.1">
    <property type="nucleotide sequence ID" value="XM_001395234.2"/>
</dbReference>
<dbReference type="SMR" id="A2QYN2"/>
<dbReference type="CAZy" id="GH2">
    <property type="family name" value="Glycoside Hydrolase Family 2"/>
</dbReference>
<dbReference type="GlyCosmos" id="A2QYN2">
    <property type="glycosylation" value="1 site, No reported glycans"/>
</dbReference>
<dbReference type="EnsemblFungi" id="CAK48467">
    <property type="protein sequence ID" value="CAK48467"/>
    <property type="gene ID" value="An12g01850"/>
</dbReference>
<dbReference type="GeneID" id="4985535"/>
<dbReference type="KEGG" id="ang:An12g01850"/>
<dbReference type="VEuPathDB" id="FungiDB:An12g01850"/>
<dbReference type="HOGENOM" id="CLU_005015_1_0_1"/>
<dbReference type="UniPathway" id="UPA00280"/>
<dbReference type="Proteomes" id="UP000006706">
    <property type="component" value="Chromosome 3L"/>
</dbReference>
<dbReference type="GO" id="GO:0004567">
    <property type="term" value="F:beta-mannosidase activity"/>
    <property type="evidence" value="ECO:0007669"/>
    <property type="project" value="UniProtKB-EC"/>
</dbReference>
<dbReference type="GO" id="GO:0006516">
    <property type="term" value="P:glycoprotein catabolic process"/>
    <property type="evidence" value="ECO:0007669"/>
    <property type="project" value="TreeGrafter"/>
</dbReference>
<dbReference type="GO" id="GO:0000272">
    <property type="term" value="P:polysaccharide catabolic process"/>
    <property type="evidence" value="ECO:0007669"/>
    <property type="project" value="UniProtKB-KW"/>
</dbReference>
<dbReference type="FunFam" id="2.60.120.260:FF:000118">
    <property type="entry name" value="Beta-mannosidase B"/>
    <property type="match status" value="1"/>
</dbReference>
<dbReference type="FunFam" id="3.20.20.80:FF:000050">
    <property type="entry name" value="Beta-mannosidase B"/>
    <property type="match status" value="1"/>
</dbReference>
<dbReference type="Gene3D" id="2.60.120.260">
    <property type="entry name" value="Galactose-binding domain-like"/>
    <property type="match status" value="1"/>
</dbReference>
<dbReference type="Gene3D" id="3.20.20.80">
    <property type="entry name" value="Glycosidases"/>
    <property type="match status" value="1"/>
</dbReference>
<dbReference type="Gene3D" id="2.60.40.10">
    <property type="entry name" value="Immunoglobulins"/>
    <property type="match status" value="1"/>
</dbReference>
<dbReference type="InterPro" id="IPR036156">
    <property type="entry name" value="Beta-gal/glucu_dom_sf"/>
</dbReference>
<dbReference type="InterPro" id="IPR054593">
    <property type="entry name" value="Beta-mannosidase-like_N2"/>
</dbReference>
<dbReference type="InterPro" id="IPR050887">
    <property type="entry name" value="Beta-mannosidase_GH2"/>
</dbReference>
<dbReference type="InterPro" id="IPR008979">
    <property type="entry name" value="Galactose-bd-like_sf"/>
</dbReference>
<dbReference type="InterPro" id="IPR006102">
    <property type="entry name" value="Glyco_hydro_2_Ig-like"/>
</dbReference>
<dbReference type="InterPro" id="IPR017853">
    <property type="entry name" value="Glycoside_hydrolase_SF"/>
</dbReference>
<dbReference type="InterPro" id="IPR013783">
    <property type="entry name" value="Ig-like_fold"/>
</dbReference>
<dbReference type="InterPro" id="IPR041447">
    <property type="entry name" value="Mannosidase_ig"/>
</dbReference>
<dbReference type="PANTHER" id="PTHR43730">
    <property type="entry name" value="BETA-MANNOSIDASE"/>
    <property type="match status" value="1"/>
</dbReference>
<dbReference type="PANTHER" id="PTHR43730:SF1">
    <property type="entry name" value="BETA-MANNOSIDASE"/>
    <property type="match status" value="1"/>
</dbReference>
<dbReference type="Pfam" id="PF00703">
    <property type="entry name" value="Glyco_hydro_2"/>
    <property type="match status" value="1"/>
</dbReference>
<dbReference type="Pfam" id="PF22666">
    <property type="entry name" value="Glyco_hydro_2_N2"/>
    <property type="match status" value="1"/>
</dbReference>
<dbReference type="Pfam" id="PF17786">
    <property type="entry name" value="Mannosidase_ig"/>
    <property type="match status" value="1"/>
</dbReference>
<dbReference type="SUPFAM" id="SSF51445">
    <property type="entry name" value="(Trans)glycosidases"/>
    <property type="match status" value="1"/>
</dbReference>
<dbReference type="SUPFAM" id="SSF49303">
    <property type="entry name" value="beta-Galactosidase/glucuronidase domain"/>
    <property type="match status" value="2"/>
</dbReference>
<dbReference type="SUPFAM" id="SSF49785">
    <property type="entry name" value="Galactose-binding domain-like"/>
    <property type="match status" value="1"/>
</dbReference>
<gene>
    <name type="primary">mndB</name>
    <name type="ORF">An12g01850</name>
</gene>
<feature type="chain" id="PRO_0000394655" description="Beta-mannosidase B">
    <location>
        <begin position="1"/>
        <end position="844"/>
    </location>
</feature>
<feature type="active site" description="Proton donor" evidence="1">
    <location>
        <position position="432"/>
    </location>
</feature>
<feature type="glycosylation site" description="N-linked (GlcNAc...) asparagine" evidence="2">
    <location>
        <position position="723"/>
    </location>
</feature>
<name>MANBB_ASPNC</name>
<accession>A2QYN2</accession>
<sequence length="844" mass="97117">MAAFAQYTLSTGWYFKDRDELASEAWMPVPVVPSVVHQDLQANGKLKNPYVGFNELDARWVNEKSWTYRKILQKPTVLAGSRIVLAFDGLDTFAKVKLDNNIILESSNMFQAYRVDVTKALDCGDEHVLEIEFDCAMLRAQELRKQDPNHNWASFNGDPARMSVRKAQYHWGWDWGPVLMTAGIWRAVRLEVYSTRLADLWTEINLDPTHKTASISAFTELESVDLDPSYKVKFTITLHGKQIAQAEATPQEGRAKVEFNIDQPCLWWPHGYGDSTLYEVSASLNADQLELHRVTKKIGIRTAEVVQRPDKHGKSFFFRINGVDIFCGGSCWIPADNLLPNISPQRYRKWIQLMVAGRQAMIRVWGGGCYEDDSFYEACDELGVLVWQDFMFGCGNYPTWPELLKSIEQEAIYNVRRLRHHPSIVVYVGNNEDYQVQEQAGLEYNYEDKNPENWLKTNFPARYIYEELLPSVVERCSPKTFYHPGSPWGDGKITSDPTVGDMHQWNVWHGTQEKYQIFDTLGGRFNSEFGMEAFPHLSTIEYFVENEKDKYPQSHVLDFHNKADGHERRIATYLVENLRTATDLETYIYLTQVVQAETMMFGYRGWRRQWGDERHCGGALLWQLNDCWPTISWAIVDYFLRPKPAYYAVARVLNPVAVGVRREHHDWSITHAQPPKTSKYELWVVSSLQKPASGKVELRFLSVDTGREIRERIVRENVDIVPNGTTNLITDGLIDHTVDAEPHVLAARLWVDGEIVARDVDWPQPFKYLDFADRGLEVKRVSEASDQQVFQISTEKPVKCLVFEERDGVKFSDSAMDIVPGDVQTVKVTGLRADEKLKYKFLGQ</sequence>